<name>INPP_MOUSE</name>
<dbReference type="EC" id="3.1.3.57" evidence="1"/>
<dbReference type="EMBL" id="U27295">
    <property type="protein sequence ID" value="AAA97574.1"/>
    <property type="molecule type" value="mRNA"/>
</dbReference>
<dbReference type="EMBL" id="AK078382">
    <property type="protein sequence ID" value="BAC37245.1"/>
    <property type="molecule type" value="mRNA"/>
</dbReference>
<dbReference type="EMBL" id="BC025072">
    <property type="protein sequence ID" value="AAH25072.1"/>
    <property type="molecule type" value="mRNA"/>
</dbReference>
<dbReference type="CCDS" id="CCDS14947.1"/>
<dbReference type="RefSeq" id="NP_001419581.1">
    <property type="nucleotide sequence ID" value="NM_001432652.1"/>
</dbReference>
<dbReference type="RefSeq" id="NP_001419582.1">
    <property type="nucleotide sequence ID" value="NM_001432653.1"/>
</dbReference>
<dbReference type="RefSeq" id="NP_001419583.1">
    <property type="nucleotide sequence ID" value="NM_001432654.1"/>
</dbReference>
<dbReference type="RefSeq" id="NP_032410.2">
    <property type="nucleotide sequence ID" value="NM_008384.3"/>
</dbReference>
<dbReference type="RefSeq" id="XP_011236743.1">
    <property type="nucleotide sequence ID" value="XM_011238441.3"/>
</dbReference>
<dbReference type="RefSeq" id="XP_011236744.1">
    <property type="nucleotide sequence ID" value="XM_011238442.4"/>
</dbReference>
<dbReference type="SMR" id="P49442"/>
<dbReference type="BioGRID" id="200767">
    <property type="interactions" value="2"/>
</dbReference>
<dbReference type="FunCoup" id="P49442">
    <property type="interactions" value="754"/>
</dbReference>
<dbReference type="IntAct" id="P49442">
    <property type="interactions" value="2"/>
</dbReference>
<dbReference type="MINT" id="P49442"/>
<dbReference type="STRING" id="10090.ENSMUSP00000027271"/>
<dbReference type="GlyGen" id="P49442">
    <property type="glycosylation" value="2 sites, 1 O-linked glycan (2 sites)"/>
</dbReference>
<dbReference type="iPTMnet" id="P49442"/>
<dbReference type="PhosphoSitePlus" id="P49442"/>
<dbReference type="SwissPalm" id="P49442"/>
<dbReference type="jPOST" id="P49442"/>
<dbReference type="PaxDb" id="10090-ENSMUSP00000027271"/>
<dbReference type="PeptideAtlas" id="P49442"/>
<dbReference type="ProteomicsDB" id="266993"/>
<dbReference type="Pumba" id="P49442"/>
<dbReference type="Antibodypedia" id="34038">
    <property type="antibodies" value="144 antibodies from 22 providers"/>
</dbReference>
<dbReference type="DNASU" id="16329"/>
<dbReference type="Ensembl" id="ENSMUST00000027271.9">
    <property type="protein sequence ID" value="ENSMUSP00000027271.3"/>
    <property type="gene ID" value="ENSMUSG00000026102.10"/>
</dbReference>
<dbReference type="GeneID" id="16329"/>
<dbReference type="KEGG" id="mmu:16329"/>
<dbReference type="UCSC" id="uc007ayo.2">
    <property type="organism name" value="mouse"/>
</dbReference>
<dbReference type="AGR" id="MGI:104848"/>
<dbReference type="CTD" id="3628"/>
<dbReference type="MGI" id="MGI:104848">
    <property type="gene designation" value="Inpp1"/>
</dbReference>
<dbReference type="VEuPathDB" id="HostDB:ENSMUSG00000026102"/>
<dbReference type="eggNOG" id="KOG3099">
    <property type="taxonomic scope" value="Eukaryota"/>
</dbReference>
<dbReference type="GeneTree" id="ENSGT00940000156785"/>
<dbReference type="HOGENOM" id="CLU_043868_2_0_1"/>
<dbReference type="InParanoid" id="P49442"/>
<dbReference type="OMA" id="KGSTFRW"/>
<dbReference type="OrthoDB" id="9977309at2759"/>
<dbReference type="PhylomeDB" id="P49442"/>
<dbReference type="TreeFam" id="TF314300"/>
<dbReference type="BRENDA" id="3.1.3.57">
    <property type="organism ID" value="3474"/>
</dbReference>
<dbReference type="Reactome" id="R-MMU-1855183">
    <property type="pathway name" value="Synthesis of IP2, IP, and Ins in the cytosol"/>
</dbReference>
<dbReference type="UniPathway" id="UPA00944"/>
<dbReference type="BioGRID-ORCS" id="16329">
    <property type="hits" value="4 hits in 79 CRISPR screens"/>
</dbReference>
<dbReference type="ChiTaRS" id="Inpp1">
    <property type="organism name" value="mouse"/>
</dbReference>
<dbReference type="PRO" id="PR:P49442"/>
<dbReference type="Proteomes" id="UP000000589">
    <property type="component" value="Chromosome 1"/>
</dbReference>
<dbReference type="RNAct" id="P49442">
    <property type="molecule type" value="protein"/>
</dbReference>
<dbReference type="Bgee" id="ENSMUSG00000026102">
    <property type="expression patterns" value="Expressed in granulocyte and 246 other cell types or tissues"/>
</dbReference>
<dbReference type="ExpressionAtlas" id="P49442">
    <property type="expression patterns" value="baseline and differential"/>
</dbReference>
<dbReference type="GO" id="GO:0052829">
    <property type="term" value="F:inositol-1,3,4-trisphosphate 1-phosphatase activity"/>
    <property type="evidence" value="ECO:0000250"/>
    <property type="project" value="UniProtKB"/>
</dbReference>
<dbReference type="GO" id="GO:0004441">
    <property type="term" value="F:inositol-1,4-bisphosphate 1-phosphatase activity"/>
    <property type="evidence" value="ECO:0000250"/>
    <property type="project" value="UniProtKB"/>
</dbReference>
<dbReference type="GO" id="GO:0046872">
    <property type="term" value="F:metal ion binding"/>
    <property type="evidence" value="ECO:0007669"/>
    <property type="project" value="UniProtKB-KW"/>
</dbReference>
<dbReference type="GO" id="GO:0046854">
    <property type="term" value="P:phosphatidylinositol phosphate biosynthetic process"/>
    <property type="evidence" value="ECO:0007669"/>
    <property type="project" value="InterPro"/>
</dbReference>
<dbReference type="CDD" id="cd01640">
    <property type="entry name" value="IPPase"/>
    <property type="match status" value="1"/>
</dbReference>
<dbReference type="FunFam" id="3.40.190.80:FF:000015">
    <property type="entry name" value="Inositol polyphosphate 1-phosphatase"/>
    <property type="match status" value="1"/>
</dbReference>
<dbReference type="FunFam" id="4.10.460.10:FF:000001">
    <property type="entry name" value="Inositol polyphosphate 1-phosphatase"/>
    <property type="match status" value="1"/>
</dbReference>
<dbReference type="Gene3D" id="3.40.190.80">
    <property type="match status" value="1"/>
</dbReference>
<dbReference type="Gene3D" id="3.30.540.10">
    <property type="entry name" value="Fructose-1,6-Bisphosphatase, subunit A, domain 1"/>
    <property type="match status" value="1"/>
</dbReference>
<dbReference type="Gene3D" id="4.10.460.10">
    <property type="entry name" value="Inositol Polyphosphate 1-phosphatase, domain 1"/>
    <property type="match status" value="1"/>
</dbReference>
<dbReference type="InterPro" id="IPR050725">
    <property type="entry name" value="CysQ/Inositol_MonoPase"/>
</dbReference>
<dbReference type="InterPro" id="IPR020583">
    <property type="entry name" value="Inositol_monoP_metal-BS"/>
</dbReference>
<dbReference type="InterPro" id="IPR000760">
    <property type="entry name" value="Inositol_monophosphatase-like"/>
</dbReference>
<dbReference type="InterPro" id="IPR020550">
    <property type="entry name" value="Inositol_monophosphatase_CS"/>
</dbReference>
<dbReference type="InterPro" id="IPR044897">
    <property type="entry name" value="INPP1_dom_1"/>
</dbReference>
<dbReference type="PANTHER" id="PTHR43028">
    <property type="entry name" value="3'(2'),5'-BISPHOSPHATE NUCLEOTIDASE 1"/>
    <property type="match status" value="1"/>
</dbReference>
<dbReference type="PANTHER" id="PTHR43028:SF3">
    <property type="entry name" value="INOSITOL POLYPHOSPHATE 1-PHOSPHATASE"/>
    <property type="match status" value="1"/>
</dbReference>
<dbReference type="Pfam" id="PF00459">
    <property type="entry name" value="Inositol_P"/>
    <property type="match status" value="1"/>
</dbReference>
<dbReference type="SUPFAM" id="SSF56655">
    <property type="entry name" value="Carbohydrate phosphatase"/>
    <property type="match status" value="1"/>
</dbReference>
<dbReference type="PROSITE" id="PS00629">
    <property type="entry name" value="IMP_1"/>
    <property type="match status" value="1"/>
</dbReference>
<dbReference type="PROSITE" id="PS00630">
    <property type="entry name" value="IMP_2"/>
    <property type="match status" value="1"/>
</dbReference>
<evidence type="ECO:0000250" key="1">
    <source>
        <dbReference type="UniProtKB" id="P21327"/>
    </source>
</evidence>
<evidence type="ECO:0000250" key="2">
    <source>
        <dbReference type="UniProtKB" id="P49441"/>
    </source>
</evidence>
<evidence type="ECO:0000305" key="3"/>
<evidence type="ECO:0000312" key="4">
    <source>
        <dbReference type="MGI" id="MGI:104848"/>
    </source>
</evidence>
<reference key="1">
    <citation type="journal article" date="1995" name="Genomics">
        <title>Identification and chromosomal mapping of the mouse inositol polyphosphate 1-phosphatase gene.</title>
        <authorList>
            <person name="Okabe I."/>
            <person name="Nussbaum R.L."/>
        </authorList>
    </citation>
    <scope>NUCLEOTIDE SEQUENCE [MRNA]</scope>
</reference>
<reference key="2">
    <citation type="journal article" date="2005" name="Science">
        <title>The transcriptional landscape of the mammalian genome.</title>
        <authorList>
            <person name="Carninci P."/>
            <person name="Kasukawa T."/>
            <person name="Katayama S."/>
            <person name="Gough J."/>
            <person name="Frith M.C."/>
            <person name="Maeda N."/>
            <person name="Oyama R."/>
            <person name="Ravasi T."/>
            <person name="Lenhard B."/>
            <person name="Wells C."/>
            <person name="Kodzius R."/>
            <person name="Shimokawa K."/>
            <person name="Bajic V.B."/>
            <person name="Brenner S.E."/>
            <person name="Batalov S."/>
            <person name="Forrest A.R."/>
            <person name="Zavolan M."/>
            <person name="Davis M.J."/>
            <person name="Wilming L.G."/>
            <person name="Aidinis V."/>
            <person name="Allen J.E."/>
            <person name="Ambesi-Impiombato A."/>
            <person name="Apweiler R."/>
            <person name="Aturaliya R.N."/>
            <person name="Bailey T.L."/>
            <person name="Bansal M."/>
            <person name="Baxter L."/>
            <person name="Beisel K.W."/>
            <person name="Bersano T."/>
            <person name="Bono H."/>
            <person name="Chalk A.M."/>
            <person name="Chiu K.P."/>
            <person name="Choudhary V."/>
            <person name="Christoffels A."/>
            <person name="Clutterbuck D.R."/>
            <person name="Crowe M.L."/>
            <person name="Dalla E."/>
            <person name="Dalrymple B.P."/>
            <person name="de Bono B."/>
            <person name="Della Gatta G."/>
            <person name="di Bernardo D."/>
            <person name="Down T."/>
            <person name="Engstrom P."/>
            <person name="Fagiolini M."/>
            <person name="Faulkner G."/>
            <person name="Fletcher C.F."/>
            <person name="Fukushima T."/>
            <person name="Furuno M."/>
            <person name="Futaki S."/>
            <person name="Gariboldi M."/>
            <person name="Georgii-Hemming P."/>
            <person name="Gingeras T.R."/>
            <person name="Gojobori T."/>
            <person name="Green R.E."/>
            <person name="Gustincich S."/>
            <person name="Harbers M."/>
            <person name="Hayashi Y."/>
            <person name="Hensch T.K."/>
            <person name="Hirokawa N."/>
            <person name="Hill D."/>
            <person name="Huminiecki L."/>
            <person name="Iacono M."/>
            <person name="Ikeo K."/>
            <person name="Iwama A."/>
            <person name="Ishikawa T."/>
            <person name="Jakt M."/>
            <person name="Kanapin A."/>
            <person name="Katoh M."/>
            <person name="Kawasawa Y."/>
            <person name="Kelso J."/>
            <person name="Kitamura H."/>
            <person name="Kitano H."/>
            <person name="Kollias G."/>
            <person name="Krishnan S.P."/>
            <person name="Kruger A."/>
            <person name="Kummerfeld S.K."/>
            <person name="Kurochkin I.V."/>
            <person name="Lareau L.F."/>
            <person name="Lazarevic D."/>
            <person name="Lipovich L."/>
            <person name="Liu J."/>
            <person name="Liuni S."/>
            <person name="McWilliam S."/>
            <person name="Madan Babu M."/>
            <person name="Madera M."/>
            <person name="Marchionni L."/>
            <person name="Matsuda H."/>
            <person name="Matsuzawa S."/>
            <person name="Miki H."/>
            <person name="Mignone F."/>
            <person name="Miyake S."/>
            <person name="Morris K."/>
            <person name="Mottagui-Tabar S."/>
            <person name="Mulder N."/>
            <person name="Nakano N."/>
            <person name="Nakauchi H."/>
            <person name="Ng P."/>
            <person name="Nilsson R."/>
            <person name="Nishiguchi S."/>
            <person name="Nishikawa S."/>
            <person name="Nori F."/>
            <person name="Ohara O."/>
            <person name="Okazaki Y."/>
            <person name="Orlando V."/>
            <person name="Pang K.C."/>
            <person name="Pavan W.J."/>
            <person name="Pavesi G."/>
            <person name="Pesole G."/>
            <person name="Petrovsky N."/>
            <person name="Piazza S."/>
            <person name="Reed J."/>
            <person name="Reid J.F."/>
            <person name="Ring B.Z."/>
            <person name="Ringwald M."/>
            <person name="Rost B."/>
            <person name="Ruan Y."/>
            <person name="Salzberg S.L."/>
            <person name="Sandelin A."/>
            <person name="Schneider C."/>
            <person name="Schoenbach C."/>
            <person name="Sekiguchi K."/>
            <person name="Semple C.A."/>
            <person name="Seno S."/>
            <person name="Sessa L."/>
            <person name="Sheng Y."/>
            <person name="Shibata Y."/>
            <person name="Shimada H."/>
            <person name="Shimada K."/>
            <person name="Silva D."/>
            <person name="Sinclair B."/>
            <person name="Sperling S."/>
            <person name="Stupka E."/>
            <person name="Sugiura K."/>
            <person name="Sultana R."/>
            <person name="Takenaka Y."/>
            <person name="Taki K."/>
            <person name="Tammoja K."/>
            <person name="Tan S.L."/>
            <person name="Tang S."/>
            <person name="Taylor M.S."/>
            <person name="Tegner J."/>
            <person name="Teichmann S.A."/>
            <person name="Ueda H.R."/>
            <person name="van Nimwegen E."/>
            <person name="Verardo R."/>
            <person name="Wei C.L."/>
            <person name="Yagi K."/>
            <person name="Yamanishi H."/>
            <person name="Zabarovsky E."/>
            <person name="Zhu S."/>
            <person name="Zimmer A."/>
            <person name="Hide W."/>
            <person name="Bult C."/>
            <person name="Grimmond S.M."/>
            <person name="Teasdale R.D."/>
            <person name="Liu E.T."/>
            <person name="Brusic V."/>
            <person name="Quackenbush J."/>
            <person name="Wahlestedt C."/>
            <person name="Mattick J.S."/>
            <person name="Hume D.A."/>
            <person name="Kai C."/>
            <person name="Sasaki D."/>
            <person name="Tomaru Y."/>
            <person name="Fukuda S."/>
            <person name="Kanamori-Katayama M."/>
            <person name="Suzuki M."/>
            <person name="Aoki J."/>
            <person name="Arakawa T."/>
            <person name="Iida J."/>
            <person name="Imamura K."/>
            <person name="Itoh M."/>
            <person name="Kato T."/>
            <person name="Kawaji H."/>
            <person name="Kawagashira N."/>
            <person name="Kawashima T."/>
            <person name="Kojima M."/>
            <person name="Kondo S."/>
            <person name="Konno H."/>
            <person name="Nakano K."/>
            <person name="Ninomiya N."/>
            <person name="Nishio T."/>
            <person name="Okada M."/>
            <person name="Plessy C."/>
            <person name="Shibata K."/>
            <person name="Shiraki T."/>
            <person name="Suzuki S."/>
            <person name="Tagami M."/>
            <person name="Waki K."/>
            <person name="Watahiki A."/>
            <person name="Okamura-Oho Y."/>
            <person name="Suzuki H."/>
            <person name="Kawai J."/>
            <person name="Hayashizaki Y."/>
        </authorList>
    </citation>
    <scope>NUCLEOTIDE SEQUENCE [LARGE SCALE MRNA]</scope>
    <source>
        <strain>C57BL/6J</strain>
        <tissue>Cerebellum</tissue>
    </source>
</reference>
<reference key="3">
    <citation type="journal article" date="2004" name="Genome Res.">
        <title>The status, quality, and expansion of the NIH full-length cDNA project: the Mammalian Gene Collection (MGC).</title>
        <authorList>
            <consortium name="The MGC Project Team"/>
        </authorList>
    </citation>
    <scope>NUCLEOTIDE SEQUENCE [LARGE SCALE MRNA]</scope>
    <source>
        <strain>FVB/N</strain>
        <tissue>Mammary gland</tissue>
    </source>
</reference>
<reference key="4">
    <citation type="journal article" date="2010" name="Cell">
        <title>A tissue-specific atlas of mouse protein phosphorylation and expression.</title>
        <authorList>
            <person name="Huttlin E.L."/>
            <person name="Jedrychowski M.P."/>
            <person name="Elias J.E."/>
            <person name="Goswami T."/>
            <person name="Rad R."/>
            <person name="Beausoleil S.A."/>
            <person name="Villen J."/>
            <person name="Haas W."/>
            <person name="Sowa M.E."/>
            <person name="Gygi S.P."/>
        </authorList>
    </citation>
    <scope>IDENTIFICATION BY MASS SPECTROMETRY [LARGE SCALE ANALYSIS]</scope>
    <source>
        <tissue>Brain</tissue>
        <tissue>Brown adipose tissue</tissue>
        <tissue>Heart</tissue>
        <tissue>Kidney</tissue>
        <tissue>Liver</tissue>
        <tissue>Lung</tissue>
        <tissue>Pancreas</tissue>
        <tissue>Spleen</tissue>
        <tissue>Testis</tissue>
    </source>
</reference>
<sequence length="396" mass="43346">MSDILLELLCVSEKAANIARACRQQETLFQLLIEEKKGAEKNKKFAADFKTLADVLVQEVIKQNMENKFPGLGKKVFGEESNEFTNDLGEKITVELQSTEEETAELLSKVLNGNMPASEALAQVVHEDVDLTDPTLESLDISIPHESLGIWVDPIDSTYQYIKGSANVKSNQGIFPSGLQCVTILIGVYDLQTGLPLMGVINQPFASQNLTTLRWKGQCYWGLSYMGTNIHSLQLAISKSDSETQTENSDREFSSPFSAVISTSEKDTIKAALSRVCGGSVFPAAGAGYKSLCVIQGLADIYIFSEDTTYKWDSCAAHAILRAMGGGIVDMKECLERSPDTGLDLPQLLYHVENKGASGVELWANKGGLIAYRSRNRLDTFLSRLIQNLGPVKTQA</sequence>
<organism>
    <name type="scientific">Mus musculus</name>
    <name type="common">Mouse</name>
    <dbReference type="NCBI Taxonomy" id="10090"/>
    <lineage>
        <taxon>Eukaryota</taxon>
        <taxon>Metazoa</taxon>
        <taxon>Chordata</taxon>
        <taxon>Craniata</taxon>
        <taxon>Vertebrata</taxon>
        <taxon>Euteleostomi</taxon>
        <taxon>Mammalia</taxon>
        <taxon>Eutheria</taxon>
        <taxon>Euarchontoglires</taxon>
        <taxon>Glires</taxon>
        <taxon>Rodentia</taxon>
        <taxon>Myomorpha</taxon>
        <taxon>Muroidea</taxon>
        <taxon>Muridae</taxon>
        <taxon>Murinae</taxon>
        <taxon>Mus</taxon>
        <taxon>Mus</taxon>
    </lineage>
</organism>
<gene>
    <name evidence="4" type="primary">Inpp1</name>
</gene>
<proteinExistence type="evidence at protein level"/>
<accession>P49442</accession>
<accession>Q8R3L1</accession>
<feature type="chain" id="PRO_0000142511" description="Inositol polyphosphate 1-phosphatase">
    <location>
        <begin position="1"/>
        <end position="396"/>
    </location>
</feature>
<feature type="binding site" evidence="1">
    <location>
        <position position="54"/>
    </location>
    <ligand>
        <name>Li(+)</name>
        <dbReference type="ChEBI" id="CHEBI:49713"/>
        <note>inhibitor</note>
    </ligand>
</feature>
<feature type="binding site" evidence="1">
    <location>
        <position position="79"/>
    </location>
    <ligand>
        <name>Mg(2+)</name>
        <dbReference type="ChEBI" id="CHEBI:18420"/>
        <label>1</label>
    </ligand>
</feature>
<feature type="binding site" evidence="1">
    <location>
        <position position="80"/>
    </location>
    <ligand>
        <name>Li(+)</name>
        <dbReference type="ChEBI" id="CHEBI:49713"/>
        <note>inhibitor</note>
    </ligand>
</feature>
<feature type="binding site" evidence="1">
    <location>
        <position position="153"/>
    </location>
    <ligand>
        <name>Mg(2+)</name>
        <dbReference type="ChEBI" id="CHEBI:18420"/>
        <label>1</label>
    </ligand>
</feature>
<feature type="binding site" evidence="1">
    <location>
        <position position="153"/>
    </location>
    <ligand>
        <name>Mg(2+)</name>
        <dbReference type="ChEBI" id="CHEBI:18420"/>
        <label>2</label>
    </ligand>
</feature>
<feature type="binding site" evidence="1">
    <location>
        <position position="155"/>
    </location>
    <ligand>
        <name>Mg(2+)</name>
        <dbReference type="ChEBI" id="CHEBI:18420"/>
        <label>1</label>
    </ligand>
</feature>
<feature type="binding site" evidence="1">
    <location>
        <position position="156"/>
    </location>
    <ligand>
        <name>1D-myo-inositol 1,4-bisphosphate</name>
        <dbReference type="ChEBI" id="CHEBI:58282"/>
    </ligand>
</feature>
<feature type="binding site" evidence="1">
    <location>
        <position position="157"/>
    </location>
    <ligand>
        <name>1D-myo-inositol 1,4-bisphosphate</name>
        <dbReference type="ChEBI" id="CHEBI:58282"/>
    </ligand>
</feature>
<feature type="binding site" evidence="1">
    <location>
        <position position="158"/>
    </location>
    <ligand>
        <name>1D-myo-inositol 1,4-bisphosphate</name>
        <dbReference type="ChEBI" id="CHEBI:58282"/>
    </ligand>
</feature>
<feature type="binding site" evidence="1">
    <location>
        <position position="264"/>
    </location>
    <ligand>
        <name>1D-myo-inositol 1,4-bisphosphate</name>
        <dbReference type="ChEBI" id="CHEBI:58282"/>
    </ligand>
</feature>
<feature type="binding site" evidence="1">
    <location>
        <position position="266"/>
    </location>
    <ligand>
        <name>1D-myo-inositol 1,4-bisphosphate</name>
        <dbReference type="ChEBI" id="CHEBI:58282"/>
    </ligand>
</feature>
<feature type="binding site" evidence="1">
    <location>
        <position position="286"/>
    </location>
    <ligand>
        <name>1D-myo-inositol 1,4-bisphosphate</name>
        <dbReference type="ChEBI" id="CHEBI:58282"/>
    </ligand>
</feature>
<feature type="binding site" evidence="1">
    <location>
        <position position="287"/>
    </location>
    <ligand>
        <name>1D-myo-inositol 1,4-bisphosphate</name>
        <dbReference type="ChEBI" id="CHEBI:58282"/>
    </ligand>
</feature>
<feature type="binding site" evidence="1">
    <location>
        <position position="290"/>
    </location>
    <ligand>
        <name>1D-myo-inositol 1,4-bisphosphate</name>
        <dbReference type="ChEBI" id="CHEBI:58282"/>
    </ligand>
</feature>
<feature type="binding site" evidence="1">
    <location>
        <position position="308"/>
    </location>
    <ligand>
        <name>1D-myo-inositol 1,4-bisphosphate</name>
        <dbReference type="ChEBI" id="CHEBI:58282"/>
    </ligand>
</feature>
<feature type="binding site" evidence="1">
    <location>
        <position position="313"/>
    </location>
    <ligand>
        <name>Mg(2+)</name>
        <dbReference type="ChEBI" id="CHEBI:18420"/>
        <label>2</label>
    </ligand>
</feature>
<feature type="modified residue" description="Phosphoserine" evidence="2">
    <location>
        <position position="314"/>
    </location>
</feature>
<feature type="sequence conflict" description="In Ref. 1; AAA97574." evidence="3" ref="1">
    <original>C</original>
    <variation>R</variation>
    <location>
        <position position="10"/>
    </location>
</feature>
<feature type="sequence conflict" description="In Ref. 1; AAA97574." evidence="3" ref="1">
    <original>V</original>
    <variation>A</variation>
    <location>
        <position position="276"/>
    </location>
</feature>
<keyword id="KW-0378">Hydrolase</keyword>
<keyword id="KW-0452">Lithium</keyword>
<keyword id="KW-0460">Magnesium</keyword>
<keyword id="KW-0479">Metal-binding</keyword>
<keyword id="KW-0597">Phosphoprotein</keyword>
<keyword id="KW-1185">Reference proteome</keyword>
<comment type="function">
    <text evidence="1">Mg(2+)-dependent phosphatase that catalyzes the hydrolysis of the 1-position phosphate from inositol 1,4-bisphosphate and inositol 1,3,4-trisphosphate and participates in inositol phosphate metabolism.</text>
</comment>
<comment type="catalytic activity">
    <reaction evidence="1">
        <text>1D-myo-inositol 1,4-bisphosphate + H2O = 1D-myo-inositol 4-phosphate + phosphate</text>
        <dbReference type="Rhea" id="RHEA:15553"/>
        <dbReference type="ChEBI" id="CHEBI:15377"/>
        <dbReference type="ChEBI" id="CHEBI:43474"/>
        <dbReference type="ChEBI" id="CHEBI:58282"/>
        <dbReference type="ChEBI" id="CHEBI:58469"/>
        <dbReference type="EC" id="3.1.3.57"/>
    </reaction>
    <physiologicalReaction direction="left-to-right" evidence="1">
        <dbReference type="Rhea" id="RHEA:15554"/>
    </physiologicalReaction>
</comment>
<comment type="catalytic activity">
    <reaction evidence="1">
        <text>1D-myo-inositol 1,3,4-trisphosphate + H2O = 1D-myo-inositol 3,4-bisphosphate + phosphate</text>
        <dbReference type="Rhea" id="RHEA:70319"/>
        <dbReference type="ChEBI" id="CHEBI:15377"/>
        <dbReference type="ChEBI" id="CHEBI:43474"/>
        <dbReference type="ChEBI" id="CHEBI:58414"/>
        <dbReference type="ChEBI" id="CHEBI:83241"/>
    </reaction>
    <physiologicalReaction direction="left-to-right" evidence="1">
        <dbReference type="Rhea" id="RHEA:70320"/>
    </physiologicalReaction>
</comment>
<comment type="cofactor">
    <cofactor evidence="1">
        <name>Mg(2+)</name>
        <dbReference type="ChEBI" id="CHEBI:18420"/>
    </cofactor>
</comment>
<comment type="activity regulation">
    <text evidence="1">Inhibited by Li(+).</text>
</comment>
<comment type="pathway">
    <text evidence="1">Signal transduction; phosphatidylinositol signaling pathway.</text>
</comment>
<comment type="subunit">
    <text evidence="1">Monomer.</text>
</comment>
<comment type="similarity">
    <text evidence="3">Belongs to the inositol monophosphatase superfamily.</text>
</comment>
<protein>
    <recommendedName>
        <fullName evidence="3">Inositol polyphosphate 1-phosphatase</fullName>
        <shortName>IPP</shortName>
        <shortName>IPPase</shortName>
        <ecNumber evidence="1">3.1.3.57</ecNumber>
    </recommendedName>
</protein>